<protein>
    <recommendedName>
        <fullName>Probable ATP-binding cassette sub-family F member 3 homolog</fullName>
    </recommendedName>
</protein>
<evidence type="ECO:0000255" key="1">
    <source>
        <dbReference type="PROSITE-ProRule" id="PRU00434"/>
    </source>
</evidence>
<evidence type="ECO:0000305" key="2"/>
<comment type="similarity">
    <text evidence="2">Belongs to the ABC transporter superfamily. ABCF family. EF3 subfamily.</text>
</comment>
<comment type="caution">
    <text evidence="2">Lacks transmembrane domains and is probably not involved in transport.</text>
</comment>
<organism>
    <name type="scientific">Encephalitozoon cuniculi (strain GB-M1)</name>
    <name type="common">Microsporidian parasite</name>
    <dbReference type="NCBI Taxonomy" id="284813"/>
    <lineage>
        <taxon>Eukaryota</taxon>
        <taxon>Fungi</taxon>
        <taxon>Fungi incertae sedis</taxon>
        <taxon>Microsporidia</taxon>
        <taxon>Unikaryonidae</taxon>
        <taxon>Encephalitozoon</taxon>
    </lineage>
</organism>
<reference key="1">
    <citation type="journal article" date="2001" name="Nature">
        <title>Genome sequence and gene compaction of the eukaryote parasite Encephalitozoon cuniculi.</title>
        <authorList>
            <person name="Katinka M.D."/>
            <person name="Duprat S."/>
            <person name="Cornillot E."/>
            <person name="Metenier G."/>
            <person name="Thomarat F."/>
            <person name="Prensier G."/>
            <person name="Barbe V."/>
            <person name="Peyretaillade E."/>
            <person name="Brottier P."/>
            <person name="Wincker P."/>
            <person name="Delbac F."/>
            <person name="El Alaoui H."/>
            <person name="Peyret P."/>
            <person name="Saurin W."/>
            <person name="Gouy M."/>
            <person name="Weissenbach J."/>
            <person name="Vivares C.P."/>
        </authorList>
    </citation>
    <scope>NUCLEOTIDE SEQUENCE [LARGE SCALE GENOMIC DNA]</scope>
    <source>
        <strain>GB-M1</strain>
    </source>
</reference>
<dbReference type="EMBL" id="AL590445">
    <property type="protein sequence ID" value="CAD26639.1"/>
    <property type="molecule type" value="Genomic_DNA"/>
</dbReference>
<dbReference type="RefSeq" id="NP_597462.1">
    <property type="nucleotide sequence ID" value="NM_001041328.1"/>
</dbReference>
<dbReference type="SMR" id="Q8SRV5"/>
<dbReference type="FunCoup" id="Q8SRV5">
    <property type="interactions" value="246"/>
</dbReference>
<dbReference type="STRING" id="284813.Q8SRV5"/>
<dbReference type="GeneID" id="859128"/>
<dbReference type="KEGG" id="ecu:ECU05_1190"/>
<dbReference type="VEuPathDB" id="MicrosporidiaDB:ECU05_1190"/>
<dbReference type="HOGENOM" id="CLU_000604_36_6_1"/>
<dbReference type="InParanoid" id="Q8SRV5"/>
<dbReference type="OMA" id="CTHIADI"/>
<dbReference type="OrthoDB" id="2110130at2759"/>
<dbReference type="Proteomes" id="UP000000819">
    <property type="component" value="Chromosome V"/>
</dbReference>
<dbReference type="GO" id="GO:0005524">
    <property type="term" value="F:ATP binding"/>
    <property type="evidence" value="ECO:0007669"/>
    <property type="project" value="UniProtKB-KW"/>
</dbReference>
<dbReference type="GO" id="GO:0016887">
    <property type="term" value="F:ATP hydrolysis activity"/>
    <property type="evidence" value="ECO:0007669"/>
    <property type="project" value="InterPro"/>
</dbReference>
<dbReference type="CDD" id="cd03221">
    <property type="entry name" value="ABCF_EF-3"/>
    <property type="match status" value="2"/>
</dbReference>
<dbReference type="FunFam" id="3.40.50.300:FF:000011">
    <property type="entry name" value="Putative ABC transporter ATP-binding component"/>
    <property type="match status" value="1"/>
</dbReference>
<dbReference type="Gene3D" id="3.40.50.300">
    <property type="entry name" value="P-loop containing nucleotide triphosphate hydrolases"/>
    <property type="match status" value="3"/>
</dbReference>
<dbReference type="InterPro" id="IPR003593">
    <property type="entry name" value="AAA+_ATPase"/>
</dbReference>
<dbReference type="InterPro" id="IPR032781">
    <property type="entry name" value="ABC_tran_Xtn"/>
</dbReference>
<dbReference type="InterPro" id="IPR003439">
    <property type="entry name" value="ABC_transporter-like_ATP-bd"/>
</dbReference>
<dbReference type="InterPro" id="IPR050611">
    <property type="entry name" value="ABCF_EF3_subfamily"/>
</dbReference>
<dbReference type="InterPro" id="IPR027417">
    <property type="entry name" value="P-loop_NTPase"/>
</dbReference>
<dbReference type="PANTHER" id="PTHR19211:SF14">
    <property type="entry name" value="ATP-BINDING CASSETTE SUB-FAMILY F MEMBER 1"/>
    <property type="match status" value="1"/>
</dbReference>
<dbReference type="PANTHER" id="PTHR19211">
    <property type="entry name" value="ATP-BINDING TRANSPORT PROTEIN-RELATED"/>
    <property type="match status" value="1"/>
</dbReference>
<dbReference type="Pfam" id="PF00005">
    <property type="entry name" value="ABC_tran"/>
    <property type="match status" value="2"/>
</dbReference>
<dbReference type="Pfam" id="PF12848">
    <property type="entry name" value="ABC_tran_Xtn"/>
    <property type="match status" value="1"/>
</dbReference>
<dbReference type="SMART" id="SM00382">
    <property type="entry name" value="AAA"/>
    <property type="match status" value="2"/>
</dbReference>
<dbReference type="SUPFAM" id="SSF52540">
    <property type="entry name" value="P-loop containing nucleoside triphosphate hydrolases"/>
    <property type="match status" value="2"/>
</dbReference>
<dbReference type="PROSITE" id="PS50893">
    <property type="entry name" value="ABC_TRANSPORTER_2"/>
    <property type="match status" value="2"/>
</dbReference>
<accession>Q8SRV5</accession>
<name>ABCF3_ENCCU</name>
<proteinExistence type="inferred from homology"/>
<sequence length="554" mass="61788">MSSKISSLKHKYLRKLERFPFESKEEATRVGVGGCTVGYTRGLVPLETPFSMRSVRGRKEIVVPDAPIQEEYLSSSSSGEDTDSEGFEGDLHLVIDLFVKGKEIIREAPLTIVRGRKYGLVGRNGIGKTTLLKAIRKRRFGIPRGMRIYMIKQDLIVDETVEDFAGAEAGRILNGLGFTKDMAVKNMRDLSGGWRMRAHLAKAINADPDLLLLDEPTNYLDINALSWLEGKIKELKTVIIVSHDRNFLNNTTEMILHLNDLKIDVYRGNYESFVKQRKEKTASARREYESQLLVREHMQSFIDRFRYNAKRASLVQSKIKMLAKMPTLVAPKQDPVIKFTFSSTPAQGALIEFVNVVFSYGCGKVLGGLSMKINSDSRIVVVGANGQGKSTFLKLLAGKLEATEGSIIRAPSLRVGYFAQHHIDHLRVNENVLDFMMKSYTQEEARRALASFGLSVDNQCIGTLSGGQKSRLGFAIINGLSPNLLVLDEPTNHLDMESIDALAEALGRFNGAVVCVSHDLSFISSAFREIYICEDGSIRRFYGDILEYKKGLGV</sequence>
<gene>
    <name type="ordered locus">ECU05_1190</name>
</gene>
<keyword id="KW-0067">ATP-binding</keyword>
<keyword id="KW-0547">Nucleotide-binding</keyword>
<keyword id="KW-1185">Reference proteome</keyword>
<keyword id="KW-0677">Repeat</keyword>
<feature type="chain" id="PRO_0000388418" description="Probable ATP-binding cassette sub-family F member 3 homolog">
    <location>
        <begin position="1"/>
        <end position="554"/>
    </location>
</feature>
<feature type="domain" description="ABC transporter 1" evidence="1">
    <location>
        <begin position="89"/>
        <end position="285"/>
    </location>
</feature>
<feature type="domain" description="ABC transporter 2" evidence="1">
    <location>
        <begin position="351"/>
        <end position="554"/>
    </location>
</feature>
<feature type="binding site" evidence="1">
    <location>
        <begin position="122"/>
        <end position="129"/>
    </location>
    <ligand>
        <name>ATP</name>
        <dbReference type="ChEBI" id="CHEBI:30616"/>
    </ligand>
</feature>
<feature type="binding site" evidence="1">
    <location>
        <begin position="383"/>
        <end position="390"/>
    </location>
    <ligand>
        <name>ATP</name>
        <dbReference type="ChEBI" id="CHEBI:30616"/>
    </ligand>
</feature>